<proteinExistence type="predicted"/>
<feature type="chain" id="PRO_0000066229" description="Uncharacterized 30.3 kDa protein">
    <location>
        <begin position="1"/>
        <end position="270"/>
    </location>
</feature>
<organism>
    <name type="scientific">Bacillus thuringiensis</name>
    <dbReference type="NCBI Taxonomy" id="1428"/>
    <lineage>
        <taxon>Bacteria</taxon>
        <taxon>Bacillati</taxon>
        <taxon>Bacillota</taxon>
        <taxon>Bacilli</taxon>
        <taxon>Bacillales</taxon>
        <taxon>Bacillaceae</taxon>
        <taxon>Bacillus</taxon>
        <taxon>Bacillus cereus group</taxon>
    </lineage>
</organism>
<protein>
    <recommendedName>
        <fullName>Uncharacterized 30.3 kDa protein</fullName>
    </recommendedName>
    <alternativeName>
        <fullName>ORF 2</fullName>
    </alternativeName>
</protein>
<sequence>MKKLLISFIAILFFICGFNLKAFAAEEIIDYQSLYNQAIQEGVLDQNSVSYNEWLKQNKEEFMPIYQDGLKQGVFLEPLSYNEWLKLNNYGQAPTGDIELFDDVTPRGSWGGFTLKAGDIFITNATSSAGIVGHAAIANGDNYILHMPGAGQGNQQLSTSNWMQKYTASGKWIKVYRLKDQTLARDVARYADRNFYSTTGSATKNVYLDYGIDTHLYQKNPTYCSKLVFQALYFGSGSRNVMQAVSGIVTPYGLIDTFTSAYRPSLVKTY</sequence>
<geneLocation type="plasmid">
    <name>pGI2</name>
</geneLocation>
<reference key="1">
    <citation type="journal article" date="1988" name="Nucleic Acids Res.">
        <title>Complete nucleotide sequence of pGI2, a Bacillus thuringiensis plasmid containing Tn4430.</title>
        <authorList>
            <person name="Mahillon J."/>
            <person name="Seurinck J."/>
        </authorList>
    </citation>
    <scope>NUCLEOTIDE SEQUENCE [GENOMIC DNA]</scope>
    <source>
        <strain>H1.1</strain>
    </source>
</reference>
<reference key="2">
    <citation type="submission" date="1998-03" db="EMBL/GenBank/DDBJ databases">
        <authorList>
            <person name="Hoflack L."/>
        </authorList>
    </citation>
    <scope>SEQUENCE REVISION</scope>
</reference>
<dbReference type="EMBL" id="X13481">
    <property type="protein sequence ID" value="CAA31837.1"/>
    <property type="molecule type" value="Genomic_DNA"/>
</dbReference>
<dbReference type="PIR" id="S02048">
    <property type="entry name" value="S02048"/>
</dbReference>
<dbReference type="RefSeq" id="WP_000734781.1">
    <property type="nucleotide sequence ID" value="NZ_VLJE01000060.1"/>
</dbReference>
<dbReference type="GeneID" id="67470636"/>
<dbReference type="InterPro" id="IPR038765">
    <property type="entry name" value="Papain-like_cys_pep_sf"/>
</dbReference>
<dbReference type="SUPFAM" id="SSF54001">
    <property type="entry name" value="Cysteine proteinases"/>
    <property type="match status" value="1"/>
</dbReference>
<keyword id="KW-0614">Plasmid</keyword>
<name>YGI2_BACTU</name>
<accession>P10023</accession>
<comment type="function">
    <text>Possibly involved in pGI2 replication mechanism.</text>
</comment>